<gene>
    <name evidence="3" type="ordered locus">PA2428</name>
</gene>
<organism>
    <name type="scientific">Pseudomonas aeruginosa (strain ATCC 15692 / DSM 22644 / CIP 104116 / JCM 14847 / LMG 12228 / 1C / PRS 101 / PAO1)</name>
    <dbReference type="NCBI Taxonomy" id="208964"/>
    <lineage>
        <taxon>Bacteria</taxon>
        <taxon>Pseudomonadati</taxon>
        <taxon>Pseudomonadota</taxon>
        <taxon>Gammaproteobacteria</taxon>
        <taxon>Pseudomonadales</taxon>
        <taxon>Pseudomonadaceae</taxon>
        <taxon>Pseudomonas</taxon>
    </lineage>
</organism>
<reference key="1">
    <citation type="journal article" date="2000" name="Nature">
        <title>Complete genome sequence of Pseudomonas aeruginosa PAO1, an opportunistic pathogen.</title>
        <authorList>
            <person name="Stover C.K."/>
            <person name="Pham X.-Q.T."/>
            <person name="Erwin A.L."/>
            <person name="Mizoguchi S.D."/>
            <person name="Warrener P."/>
            <person name="Hickey M.J."/>
            <person name="Brinkman F.S.L."/>
            <person name="Hufnagle W.O."/>
            <person name="Kowalik D.J."/>
            <person name="Lagrou M."/>
            <person name="Garber R.L."/>
            <person name="Goltry L."/>
            <person name="Tolentino E."/>
            <person name="Westbrock-Wadman S."/>
            <person name="Yuan Y."/>
            <person name="Brody L.L."/>
            <person name="Coulter S.N."/>
            <person name="Folger K.R."/>
            <person name="Kas A."/>
            <person name="Larbig K."/>
            <person name="Lim R.M."/>
            <person name="Smith K.A."/>
            <person name="Spencer D.H."/>
            <person name="Wong G.K.-S."/>
            <person name="Wu Z."/>
            <person name="Paulsen I.T."/>
            <person name="Reizer J."/>
            <person name="Saier M.H. Jr."/>
            <person name="Hancock R.E.W."/>
            <person name="Lory S."/>
            <person name="Olson M.V."/>
        </authorList>
    </citation>
    <scope>NUCLEOTIDE SEQUENCE [LARGE SCALE GENOMIC DNA]</scope>
    <source>
        <strain>ATCC 15692 / DSM 22644 / CIP 104116 / JCM 14847 / LMG 12228 / 1C / PRS 101 / PAO1</strain>
    </source>
</reference>
<reference key="2">
    <citation type="journal article" date="2008" name="Proc. Natl. Acad. Sci. U.S.A.">
        <title>Polyphosphate-dependent synthesis of ATP and ADP by the family-2 polyphosphate kinases in bacteria.</title>
        <authorList>
            <person name="Nocek B."/>
            <person name="Kochinyan S."/>
            <person name="Proudfoot M."/>
            <person name="Brown G."/>
            <person name="Evdokimova E."/>
            <person name="Osipiuk J."/>
            <person name="Edwards A.M."/>
            <person name="Savchenko A."/>
            <person name="Joachimiak A."/>
            <person name="Yakunin A.F."/>
        </authorList>
    </citation>
    <scope>FUNCTION</scope>
    <scope>CATALYTIC ACTIVITY</scope>
</reference>
<sequence>MDSYGDTSGRIGRDWLDRHDEELEQELLDDELNLDELFGPEQEDAPGELSRRRYFRELFRLQRELVKLQNWVVHTGHKVVILFEGRDAAGKGGVIKRITQRLNPRVCRVAALPAPNDREQTQWYFQRYVSHLPAGGEIVLFDRSWYNRAGVERVMGFCNDEQYEEFFRSVPEFEKMLARSGIQLLKYWFSISDAEQHLRFLSRIHDPLKQWKLSPMDLESRRRWEAYTKAKETMLERTHIPEAPWWVVQADDKKRARLNCIHHLLQQMPYREVPQPPVHLPERLRHADYVRHPTPGEIIVPEVY</sequence>
<protein>
    <recommendedName>
        <fullName evidence="2">ADP-polyphosphate phosphotransferase</fullName>
        <ecNumber evidence="1">2.7.4.-</ecNumber>
    </recommendedName>
    <alternativeName>
        <fullName evidence="2">Polyphosphate kinase PPK2 2</fullName>
    </alternativeName>
</protein>
<accession>Q9I154</accession>
<name>PK21B_PSEAE</name>
<feature type="chain" id="PRO_0000442588" description="ADP-polyphosphate phosphotransferase">
    <location>
        <begin position="1"/>
        <end position="304"/>
    </location>
</feature>
<dbReference type="EC" id="2.7.4.-" evidence="1"/>
<dbReference type="EMBL" id="AE004091">
    <property type="protein sequence ID" value="AAG05816.1"/>
    <property type="molecule type" value="Genomic_DNA"/>
</dbReference>
<dbReference type="PIR" id="G83341">
    <property type="entry name" value="G83341"/>
</dbReference>
<dbReference type="RefSeq" id="NP_251118.1">
    <property type="nucleotide sequence ID" value="NC_002516.2"/>
</dbReference>
<dbReference type="SMR" id="Q9I154"/>
<dbReference type="STRING" id="208964.PA2428"/>
<dbReference type="PaxDb" id="208964-PA2428"/>
<dbReference type="GeneID" id="882843"/>
<dbReference type="KEGG" id="pae:PA2428"/>
<dbReference type="PATRIC" id="fig|208964.12.peg.2538"/>
<dbReference type="PseudoCAP" id="PA2428"/>
<dbReference type="HOGENOM" id="CLU_048699_3_0_6"/>
<dbReference type="InParanoid" id="Q9I154"/>
<dbReference type="OrthoDB" id="9775224at2"/>
<dbReference type="PhylomeDB" id="Q9I154"/>
<dbReference type="BioCyc" id="PAER208964:G1FZ6-2465-MONOMER"/>
<dbReference type="Proteomes" id="UP000002438">
    <property type="component" value="Chromosome"/>
</dbReference>
<dbReference type="GO" id="GO:0008976">
    <property type="term" value="F:polyphosphate kinase activity"/>
    <property type="evidence" value="ECO:0000318"/>
    <property type="project" value="GO_Central"/>
</dbReference>
<dbReference type="GO" id="GO:0006754">
    <property type="term" value="P:ATP biosynthetic process"/>
    <property type="evidence" value="ECO:0007669"/>
    <property type="project" value="UniProtKB-KW"/>
</dbReference>
<dbReference type="GO" id="GO:0006183">
    <property type="term" value="P:GTP biosynthetic process"/>
    <property type="evidence" value="ECO:0000318"/>
    <property type="project" value="GO_Central"/>
</dbReference>
<dbReference type="Gene3D" id="3.40.50.300">
    <property type="entry name" value="P-loop containing nucleotide triphosphate hydrolases"/>
    <property type="match status" value="1"/>
</dbReference>
<dbReference type="InterPro" id="IPR027417">
    <property type="entry name" value="P-loop_NTPase"/>
</dbReference>
<dbReference type="InterPro" id="IPR016898">
    <property type="entry name" value="Polyphosphate_phosphotransfera"/>
</dbReference>
<dbReference type="InterPro" id="IPR022488">
    <property type="entry name" value="PPK2-related"/>
</dbReference>
<dbReference type="InterPro" id="IPR022486">
    <property type="entry name" value="PPK2_PA0141"/>
</dbReference>
<dbReference type="NCBIfam" id="TIGR03707">
    <property type="entry name" value="PPK2_P_aer"/>
    <property type="match status" value="1"/>
</dbReference>
<dbReference type="PANTHER" id="PTHR34383:SF1">
    <property type="entry name" value="ADP-POLYPHOSPHATE PHOSPHOTRANSFERASE"/>
    <property type="match status" value="1"/>
</dbReference>
<dbReference type="PANTHER" id="PTHR34383">
    <property type="entry name" value="POLYPHOSPHATE:AMP PHOSPHOTRANSFERASE-RELATED"/>
    <property type="match status" value="1"/>
</dbReference>
<dbReference type="Pfam" id="PF03976">
    <property type="entry name" value="PPK2"/>
    <property type="match status" value="1"/>
</dbReference>
<dbReference type="PIRSF" id="PIRSF028756">
    <property type="entry name" value="PPK2_prd"/>
    <property type="match status" value="1"/>
</dbReference>
<dbReference type="SUPFAM" id="SSF52540">
    <property type="entry name" value="P-loop containing nucleoside triphosphate hydrolases"/>
    <property type="match status" value="1"/>
</dbReference>
<keyword id="KW-0066">ATP synthesis</keyword>
<keyword id="KW-0418">Kinase</keyword>
<keyword id="KW-1185">Reference proteome</keyword>
<keyword id="KW-0808">Transferase</keyword>
<evidence type="ECO:0000269" key="1">
    <source>
    </source>
</evidence>
<evidence type="ECO:0000305" key="2"/>
<evidence type="ECO:0000312" key="3">
    <source>
        <dbReference type="EMBL" id="AAG05816.1"/>
    </source>
</evidence>
<comment type="function">
    <text evidence="1">Uses inorganic polyphosphate (polyP) as a donor to convert ADP to ATP.</text>
</comment>
<comment type="catalytic activity">
    <reaction evidence="1">
        <text>[phosphate](n) + ATP = [phosphate](n+1) + ADP</text>
        <dbReference type="Rhea" id="RHEA:19573"/>
        <dbReference type="Rhea" id="RHEA-COMP:9859"/>
        <dbReference type="Rhea" id="RHEA-COMP:14280"/>
        <dbReference type="ChEBI" id="CHEBI:16838"/>
        <dbReference type="ChEBI" id="CHEBI:30616"/>
        <dbReference type="ChEBI" id="CHEBI:456216"/>
    </reaction>
    <physiologicalReaction direction="right-to-left" evidence="1">
        <dbReference type="Rhea" id="RHEA:19575"/>
    </physiologicalReaction>
</comment>
<comment type="similarity">
    <text evidence="2">Belongs to the polyphosphate kinase 2 (PPK2) family. Class I subfamily.</text>
</comment>
<proteinExistence type="evidence at protein level"/>